<comment type="function">
    <text evidence="1">Facilitates the functional incorporation of the urease nickel metallocenter. This process requires GTP hydrolysis, probably effectuated by UreG.</text>
</comment>
<comment type="subunit">
    <text evidence="1">Homodimer. UreH, UreF and UreG form a complex that acts as a GTP-hydrolysis-dependent molecular chaperone, activating the urease apoprotein by helping to assemble the nickel containing metallocenter of UreC. The UreE protein probably delivers the nickel.</text>
</comment>
<comment type="subcellular location">
    <subcellularLocation>
        <location evidence="1">Cytoplasm</location>
    </subcellularLocation>
</comment>
<comment type="disruption phenotype">
    <text evidence="2">Cells missing this gene do not produce urease; addition of Ni(2+) to cell cultures does not compensate this loss of function. Normal amounts of apourease are produced by the cells. Has no effect on hydrogenase activity.</text>
</comment>
<comment type="similarity">
    <text evidence="1">Belongs to the SIMIBI class G3E GTPase family. UreG subfamily.</text>
</comment>
<name>UREG_HELHP</name>
<accession>Q93PJ0</accession>
<accession>Q7BY99</accession>
<organism>
    <name type="scientific">Helicobacter hepaticus (strain ATCC 51449 / 3B1)</name>
    <dbReference type="NCBI Taxonomy" id="235279"/>
    <lineage>
        <taxon>Bacteria</taxon>
        <taxon>Pseudomonadati</taxon>
        <taxon>Campylobacterota</taxon>
        <taxon>Epsilonproteobacteria</taxon>
        <taxon>Campylobacterales</taxon>
        <taxon>Helicobacteraceae</taxon>
        <taxon>Helicobacter</taxon>
    </lineage>
</organism>
<dbReference type="EMBL" id="AF332656">
    <property type="protein sequence ID" value="AAK69203.1"/>
    <property type="molecule type" value="Genomic_DNA"/>
</dbReference>
<dbReference type="EMBL" id="AE017125">
    <property type="protein sequence ID" value="AAP77009.1"/>
    <property type="molecule type" value="Genomic_DNA"/>
</dbReference>
<dbReference type="RefSeq" id="WP_011115254.1">
    <property type="nucleotide sequence ID" value="NC_004917.1"/>
</dbReference>
<dbReference type="SMR" id="Q93PJ0"/>
<dbReference type="STRING" id="235279.HH_0412"/>
<dbReference type="KEGG" id="hhe:HH_0412"/>
<dbReference type="eggNOG" id="COG0378">
    <property type="taxonomic scope" value="Bacteria"/>
</dbReference>
<dbReference type="HOGENOM" id="CLU_072144_1_0_7"/>
<dbReference type="OrthoDB" id="9802035at2"/>
<dbReference type="Proteomes" id="UP000002495">
    <property type="component" value="Chromosome"/>
</dbReference>
<dbReference type="GO" id="GO:0005737">
    <property type="term" value="C:cytoplasm"/>
    <property type="evidence" value="ECO:0007669"/>
    <property type="project" value="UniProtKB-SubCell"/>
</dbReference>
<dbReference type="GO" id="GO:0005525">
    <property type="term" value="F:GTP binding"/>
    <property type="evidence" value="ECO:0007669"/>
    <property type="project" value="UniProtKB-KW"/>
</dbReference>
<dbReference type="GO" id="GO:0003924">
    <property type="term" value="F:GTPase activity"/>
    <property type="evidence" value="ECO:0007669"/>
    <property type="project" value="InterPro"/>
</dbReference>
<dbReference type="GO" id="GO:0016151">
    <property type="term" value="F:nickel cation binding"/>
    <property type="evidence" value="ECO:0007669"/>
    <property type="project" value="InterPro"/>
</dbReference>
<dbReference type="GO" id="GO:0043419">
    <property type="term" value="P:urea catabolic process"/>
    <property type="evidence" value="ECO:0007669"/>
    <property type="project" value="InterPro"/>
</dbReference>
<dbReference type="CDD" id="cd05540">
    <property type="entry name" value="UreG"/>
    <property type="match status" value="1"/>
</dbReference>
<dbReference type="FunFam" id="3.40.50.300:FF:000208">
    <property type="entry name" value="Urease accessory protein UreG"/>
    <property type="match status" value="1"/>
</dbReference>
<dbReference type="Gene3D" id="3.40.50.300">
    <property type="entry name" value="P-loop containing nucleotide triphosphate hydrolases"/>
    <property type="match status" value="1"/>
</dbReference>
<dbReference type="HAMAP" id="MF_01389">
    <property type="entry name" value="UreG"/>
    <property type="match status" value="1"/>
</dbReference>
<dbReference type="InterPro" id="IPR003495">
    <property type="entry name" value="CobW/HypB/UreG_nucleotide-bd"/>
</dbReference>
<dbReference type="InterPro" id="IPR027417">
    <property type="entry name" value="P-loop_NTPase"/>
</dbReference>
<dbReference type="InterPro" id="IPR004400">
    <property type="entry name" value="UreG"/>
</dbReference>
<dbReference type="NCBIfam" id="TIGR00101">
    <property type="entry name" value="ureG"/>
    <property type="match status" value="1"/>
</dbReference>
<dbReference type="PANTHER" id="PTHR31715">
    <property type="entry name" value="UREASE ACCESSORY PROTEIN G"/>
    <property type="match status" value="1"/>
</dbReference>
<dbReference type="PANTHER" id="PTHR31715:SF0">
    <property type="entry name" value="UREASE ACCESSORY PROTEIN G"/>
    <property type="match status" value="1"/>
</dbReference>
<dbReference type="Pfam" id="PF02492">
    <property type="entry name" value="cobW"/>
    <property type="match status" value="1"/>
</dbReference>
<dbReference type="PIRSF" id="PIRSF005624">
    <property type="entry name" value="Ni-bind_GTPase"/>
    <property type="match status" value="1"/>
</dbReference>
<dbReference type="SUPFAM" id="SSF52540">
    <property type="entry name" value="P-loop containing nucleoside triphosphate hydrolases"/>
    <property type="match status" value="1"/>
</dbReference>
<reference key="1">
    <citation type="journal article" date="2001" name="Infect. Immun.">
        <title>Cloning, expression, and catalytic activity of Helicobacter hepaticus urease.</title>
        <authorList>
            <person name="Beckwith C.S."/>
            <person name="McGee D.J."/>
            <person name="Mobley H.L.T."/>
            <person name="Riley L.K."/>
        </authorList>
    </citation>
    <scope>NUCLEOTIDE SEQUENCE [GENOMIC DNA]</scope>
    <source>
        <strain>MU94-1</strain>
    </source>
</reference>
<reference key="2">
    <citation type="journal article" date="2003" name="Proc. Natl. Acad. Sci. U.S.A.">
        <title>The complete genome sequence of the carcinogenic bacterium Helicobacter hepaticus.</title>
        <authorList>
            <person name="Suerbaum S."/>
            <person name="Josenhans C."/>
            <person name="Sterzenbach T."/>
            <person name="Drescher B."/>
            <person name="Brandt P."/>
            <person name="Bell M."/>
            <person name="Droege M."/>
            <person name="Fartmann B."/>
            <person name="Fischer H.-P."/>
            <person name="Ge Z."/>
            <person name="Hoerster A."/>
            <person name="Holland R."/>
            <person name="Klein K."/>
            <person name="Koenig J."/>
            <person name="Macko L."/>
            <person name="Mendz G.L."/>
            <person name="Nyakatura G."/>
            <person name="Schauer D.B."/>
            <person name="Shen Z."/>
            <person name="Weber J."/>
            <person name="Frosch M."/>
            <person name="Fox J.G."/>
        </authorList>
    </citation>
    <scope>NUCLEOTIDE SEQUENCE [LARGE SCALE GENOMIC DNA]</scope>
    <source>
        <strain>ATCC 51449 / 3B1</strain>
    </source>
</reference>
<reference key="3">
    <citation type="journal article" date="2007" name="Microbiology">
        <title>Nickel enzyme maturation in Helicobacter hepaticus: roles of accessory proteins in hydrogenase and urease activities.</title>
        <authorList>
            <person name="Benoit S.L."/>
            <person name="Zbell A.L."/>
            <person name="Maier R.J."/>
        </authorList>
    </citation>
    <scope>DISRUPTION PHENOTYPE</scope>
    <source>
        <strain>ATCC 51449 / 3B1</strain>
    </source>
</reference>
<proteinExistence type="inferred from homology"/>
<protein>
    <recommendedName>
        <fullName evidence="1">Urease accessory protein UreG</fullName>
    </recommendedName>
</protein>
<keyword id="KW-0143">Chaperone</keyword>
<keyword id="KW-0963">Cytoplasm</keyword>
<keyword id="KW-0342">GTP-binding</keyword>
<keyword id="KW-0996">Nickel insertion</keyword>
<keyword id="KW-0547">Nucleotide-binding</keyword>
<keyword id="KW-1185">Reference proteome</keyword>
<gene>
    <name evidence="1" type="primary">ureG</name>
    <name type="ordered locus">HH_0412</name>
</gene>
<sequence>MVKIGICGPVGSGKTALIESLTRKMNEQYSLAVITNDIYTQEDAEFMSKNSVLPSERIIGVETGGCPHTAIREDASMNLEAVEEMQERFPDIEILFIESGGDNLSATFSPELADFTIFVIDVAQGDKIPRKGGPGIMRSDLLIINKIDLAPYVGANLSIMERDAKKMREDKPFLFTNIRAKEGIDAVVEWIKKYALLEDI</sequence>
<evidence type="ECO:0000255" key="1">
    <source>
        <dbReference type="HAMAP-Rule" id="MF_01389"/>
    </source>
</evidence>
<evidence type="ECO:0000269" key="2">
    <source>
    </source>
</evidence>
<feature type="chain" id="PRO_0000347394" description="Urease accessory protein UreG">
    <location>
        <begin position="1"/>
        <end position="200"/>
    </location>
</feature>
<feature type="binding site" evidence="1">
    <location>
        <begin position="8"/>
        <end position="15"/>
    </location>
    <ligand>
        <name>GTP</name>
        <dbReference type="ChEBI" id="CHEBI:37565"/>
    </ligand>
</feature>